<reference key="1">
    <citation type="journal article" date="2003" name="Nature">
        <title>The genome of a motile marine Synechococcus.</title>
        <authorList>
            <person name="Palenik B."/>
            <person name="Brahamsha B."/>
            <person name="Larimer F.W."/>
            <person name="Land M.L."/>
            <person name="Hauser L."/>
            <person name="Chain P."/>
            <person name="Lamerdin J.E."/>
            <person name="Regala W."/>
            <person name="Allen E.E."/>
            <person name="McCarren J."/>
            <person name="Paulsen I.T."/>
            <person name="Dufresne A."/>
            <person name="Partensky F."/>
            <person name="Webb E.A."/>
            <person name="Waterbury J."/>
        </authorList>
    </citation>
    <scope>NUCLEOTIDE SEQUENCE [LARGE SCALE GENOMIC DNA]</scope>
    <source>
        <strain>WH8102</strain>
    </source>
</reference>
<evidence type="ECO:0000255" key="1">
    <source>
        <dbReference type="HAMAP-Rule" id="MF_00382"/>
    </source>
</evidence>
<evidence type="ECO:0000305" key="2"/>
<accession>Q7UA43</accession>
<comment type="function">
    <text evidence="1">Binds directly to 23S ribosomal RNA and is necessary for the in vitro assembly process of the 50S ribosomal subunit. It is not involved in the protein synthesizing functions of that subunit.</text>
</comment>
<comment type="similarity">
    <text evidence="1">Belongs to the bacterial ribosomal protein bL20 family.</text>
</comment>
<feature type="chain" id="PRO_0000177246" description="Large ribosomal subunit protein bL20">
    <location>
        <begin position="1"/>
        <end position="115"/>
    </location>
</feature>
<keyword id="KW-0687">Ribonucleoprotein</keyword>
<keyword id="KW-0689">Ribosomal protein</keyword>
<keyword id="KW-0694">RNA-binding</keyword>
<keyword id="KW-0699">rRNA-binding</keyword>
<sequence>MARVKRGNVARKRRNKILRLARGFRGGNGTQFRTANQRVMKALCNAYRDRRRRKRDFRRLWIARINAAARINGVSYSRLMGGLKKADVRLNRKMLAQLAVVDPGSFSNVVATAKG</sequence>
<gene>
    <name evidence="1" type="primary">rplT</name>
    <name evidence="1" type="synonym">rpl20</name>
    <name type="ordered locus">SYNW0057</name>
</gene>
<organism>
    <name type="scientific">Parasynechococcus marenigrum (strain WH8102)</name>
    <dbReference type="NCBI Taxonomy" id="84588"/>
    <lineage>
        <taxon>Bacteria</taxon>
        <taxon>Bacillati</taxon>
        <taxon>Cyanobacteriota</taxon>
        <taxon>Cyanophyceae</taxon>
        <taxon>Synechococcales</taxon>
        <taxon>Prochlorococcaceae</taxon>
        <taxon>Parasynechococcus</taxon>
        <taxon>Parasynechococcus marenigrum</taxon>
    </lineage>
</organism>
<name>RL20_PARMW</name>
<dbReference type="EMBL" id="BX569689">
    <property type="protein sequence ID" value="CAE06572.1"/>
    <property type="molecule type" value="Genomic_DNA"/>
</dbReference>
<dbReference type="RefSeq" id="WP_011126935.1">
    <property type="nucleotide sequence ID" value="NC_005070.1"/>
</dbReference>
<dbReference type="SMR" id="Q7UA43"/>
<dbReference type="STRING" id="84588.SYNW0057"/>
<dbReference type="KEGG" id="syw:SYNW0057"/>
<dbReference type="eggNOG" id="COG0292">
    <property type="taxonomic scope" value="Bacteria"/>
</dbReference>
<dbReference type="HOGENOM" id="CLU_123265_0_1_3"/>
<dbReference type="Proteomes" id="UP000001422">
    <property type="component" value="Chromosome"/>
</dbReference>
<dbReference type="GO" id="GO:1990904">
    <property type="term" value="C:ribonucleoprotein complex"/>
    <property type="evidence" value="ECO:0007669"/>
    <property type="project" value="UniProtKB-KW"/>
</dbReference>
<dbReference type="GO" id="GO:0005840">
    <property type="term" value="C:ribosome"/>
    <property type="evidence" value="ECO:0007669"/>
    <property type="project" value="UniProtKB-KW"/>
</dbReference>
<dbReference type="GO" id="GO:0019843">
    <property type="term" value="F:rRNA binding"/>
    <property type="evidence" value="ECO:0007669"/>
    <property type="project" value="UniProtKB-UniRule"/>
</dbReference>
<dbReference type="GO" id="GO:0003735">
    <property type="term" value="F:structural constituent of ribosome"/>
    <property type="evidence" value="ECO:0007669"/>
    <property type="project" value="InterPro"/>
</dbReference>
<dbReference type="GO" id="GO:0000027">
    <property type="term" value="P:ribosomal large subunit assembly"/>
    <property type="evidence" value="ECO:0007669"/>
    <property type="project" value="UniProtKB-UniRule"/>
</dbReference>
<dbReference type="GO" id="GO:0006412">
    <property type="term" value="P:translation"/>
    <property type="evidence" value="ECO:0007669"/>
    <property type="project" value="InterPro"/>
</dbReference>
<dbReference type="CDD" id="cd07026">
    <property type="entry name" value="Ribosomal_L20"/>
    <property type="match status" value="1"/>
</dbReference>
<dbReference type="FunFam" id="1.10.1900.20:FF:000001">
    <property type="entry name" value="50S ribosomal protein L20"/>
    <property type="match status" value="1"/>
</dbReference>
<dbReference type="Gene3D" id="6.10.160.10">
    <property type="match status" value="1"/>
</dbReference>
<dbReference type="Gene3D" id="1.10.1900.20">
    <property type="entry name" value="Ribosomal protein L20"/>
    <property type="match status" value="1"/>
</dbReference>
<dbReference type="HAMAP" id="MF_00382">
    <property type="entry name" value="Ribosomal_bL20"/>
    <property type="match status" value="1"/>
</dbReference>
<dbReference type="InterPro" id="IPR005813">
    <property type="entry name" value="Ribosomal_bL20"/>
</dbReference>
<dbReference type="InterPro" id="IPR049946">
    <property type="entry name" value="RIBOSOMAL_L20_CS"/>
</dbReference>
<dbReference type="InterPro" id="IPR035566">
    <property type="entry name" value="Ribosomal_protein_bL20_C"/>
</dbReference>
<dbReference type="NCBIfam" id="TIGR01032">
    <property type="entry name" value="rplT_bact"/>
    <property type="match status" value="1"/>
</dbReference>
<dbReference type="PANTHER" id="PTHR10986">
    <property type="entry name" value="39S RIBOSOMAL PROTEIN L20"/>
    <property type="match status" value="1"/>
</dbReference>
<dbReference type="Pfam" id="PF00453">
    <property type="entry name" value="Ribosomal_L20"/>
    <property type="match status" value="1"/>
</dbReference>
<dbReference type="PRINTS" id="PR00062">
    <property type="entry name" value="RIBOSOMALL20"/>
</dbReference>
<dbReference type="SUPFAM" id="SSF74731">
    <property type="entry name" value="Ribosomal protein L20"/>
    <property type="match status" value="1"/>
</dbReference>
<dbReference type="PROSITE" id="PS00937">
    <property type="entry name" value="RIBOSOMAL_L20"/>
    <property type="match status" value="1"/>
</dbReference>
<protein>
    <recommendedName>
        <fullName evidence="1">Large ribosomal subunit protein bL20</fullName>
    </recommendedName>
    <alternativeName>
        <fullName evidence="2">50S ribosomal protein L20</fullName>
    </alternativeName>
</protein>
<proteinExistence type="inferred from homology"/>